<name>ENGB_LACP3</name>
<proteinExistence type="inferred from homology"/>
<protein>
    <recommendedName>
        <fullName evidence="1">Probable GTP-binding protein EngB</fullName>
    </recommendedName>
</protein>
<organism>
    <name type="scientific">Lacticaseibacillus paracasei (strain ATCC 334 / BCRC 17002 / CCUG 31169 / CIP 107868 / KCTC 3260 / NRRL B-441)</name>
    <name type="common">Lactobacillus paracasei</name>
    <dbReference type="NCBI Taxonomy" id="321967"/>
    <lineage>
        <taxon>Bacteria</taxon>
        <taxon>Bacillati</taxon>
        <taxon>Bacillota</taxon>
        <taxon>Bacilli</taxon>
        <taxon>Lactobacillales</taxon>
        <taxon>Lactobacillaceae</taxon>
        <taxon>Lacticaseibacillus</taxon>
    </lineage>
</organism>
<sequence length="198" mass="22216">MDVHDVKLTISAVAAAQYPEDGHPEIAFLGRSNVGKSSLINKLIQRKAMARTSGVPGKTQTLNFYDLDSRLFFVDVPGYGYAKVSKTARAKFAAMIETYLTTRQPLRGVVLLVDSRHEPTADDISMYQYLKYYQLRTLVVATKIDKTPKSKRLHVAKQIKQRLDLNQTDDVILFSATTGEGYEAVWSWLEQTAGLEGR</sequence>
<feature type="chain" id="PRO_1000005823" description="Probable GTP-binding protein EngB">
    <location>
        <begin position="1"/>
        <end position="198"/>
    </location>
</feature>
<feature type="domain" description="EngB-type G" evidence="1">
    <location>
        <begin position="22"/>
        <end position="195"/>
    </location>
</feature>
<feature type="binding site" evidence="1">
    <location>
        <begin position="30"/>
        <end position="37"/>
    </location>
    <ligand>
        <name>GTP</name>
        <dbReference type="ChEBI" id="CHEBI:37565"/>
    </ligand>
</feature>
<feature type="binding site" evidence="1">
    <location>
        <position position="37"/>
    </location>
    <ligand>
        <name>Mg(2+)</name>
        <dbReference type="ChEBI" id="CHEBI:18420"/>
    </ligand>
</feature>
<feature type="binding site" evidence="1">
    <location>
        <begin position="57"/>
        <end position="61"/>
    </location>
    <ligand>
        <name>GTP</name>
        <dbReference type="ChEBI" id="CHEBI:37565"/>
    </ligand>
</feature>
<feature type="binding site" evidence="1">
    <location>
        <position position="59"/>
    </location>
    <ligand>
        <name>Mg(2+)</name>
        <dbReference type="ChEBI" id="CHEBI:18420"/>
    </ligand>
</feature>
<feature type="binding site" evidence="1">
    <location>
        <begin position="75"/>
        <end position="78"/>
    </location>
    <ligand>
        <name>GTP</name>
        <dbReference type="ChEBI" id="CHEBI:37565"/>
    </ligand>
</feature>
<feature type="binding site" evidence="1">
    <location>
        <begin position="142"/>
        <end position="145"/>
    </location>
    <ligand>
        <name>GTP</name>
        <dbReference type="ChEBI" id="CHEBI:37565"/>
    </ligand>
</feature>
<feature type="binding site" evidence="1">
    <location>
        <begin position="174"/>
        <end position="176"/>
    </location>
    <ligand>
        <name>GTP</name>
        <dbReference type="ChEBI" id="CHEBI:37565"/>
    </ligand>
</feature>
<keyword id="KW-0131">Cell cycle</keyword>
<keyword id="KW-0132">Cell division</keyword>
<keyword id="KW-0342">GTP-binding</keyword>
<keyword id="KW-0460">Magnesium</keyword>
<keyword id="KW-0479">Metal-binding</keyword>
<keyword id="KW-0547">Nucleotide-binding</keyword>
<keyword id="KW-1185">Reference proteome</keyword>
<keyword id="KW-0717">Septation</keyword>
<gene>
    <name evidence="1" type="primary">engB</name>
    <name type="ordered locus">LSEI_1341</name>
</gene>
<accession>Q039K2</accession>
<dbReference type="EMBL" id="CP000423">
    <property type="protein sequence ID" value="ABJ70120.1"/>
    <property type="molecule type" value="Genomic_DNA"/>
</dbReference>
<dbReference type="RefSeq" id="YP_806562.1">
    <property type="nucleotide sequence ID" value="NC_008526.1"/>
</dbReference>
<dbReference type="SMR" id="Q039K2"/>
<dbReference type="STRING" id="321967.LSEI_1341"/>
<dbReference type="PaxDb" id="321967-LSEI_1341"/>
<dbReference type="KEGG" id="lca:LSEI_1341"/>
<dbReference type="PATRIC" id="fig|321967.11.peg.1319"/>
<dbReference type="HOGENOM" id="CLU_033732_3_0_9"/>
<dbReference type="Proteomes" id="UP000001651">
    <property type="component" value="Chromosome"/>
</dbReference>
<dbReference type="GO" id="GO:0005829">
    <property type="term" value="C:cytosol"/>
    <property type="evidence" value="ECO:0007669"/>
    <property type="project" value="TreeGrafter"/>
</dbReference>
<dbReference type="GO" id="GO:0005525">
    <property type="term" value="F:GTP binding"/>
    <property type="evidence" value="ECO:0007669"/>
    <property type="project" value="UniProtKB-UniRule"/>
</dbReference>
<dbReference type="GO" id="GO:0046872">
    <property type="term" value="F:metal ion binding"/>
    <property type="evidence" value="ECO:0007669"/>
    <property type="project" value="UniProtKB-KW"/>
</dbReference>
<dbReference type="GO" id="GO:0000917">
    <property type="term" value="P:division septum assembly"/>
    <property type="evidence" value="ECO:0007669"/>
    <property type="project" value="UniProtKB-KW"/>
</dbReference>
<dbReference type="CDD" id="cd01876">
    <property type="entry name" value="YihA_EngB"/>
    <property type="match status" value="1"/>
</dbReference>
<dbReference type="FunFam" id="3.40.50.300:FF:000098">
    <property type="entry name" value="Probable GTP-binding protein EngB"/>
    <property type="match status" value="1"/>
</dbReference>
<dbReference type="Gene3D" id="3.40.50.300">
    <property type="entry name" value="P-loop containing nucleotide triphosphate hydrolases"/>
    <property type="match status" value="1"/>
</dbReference>
<dbReference type="HAMAP" id="MF_00321">
    <property type="entry name" value="GTPase_EngB"/>
    <property type="match status" value="1"/>
</dbReference>
<dbReference type="InterPro" id="IPR030393">
    <property type="entry name" value="G_ENGB_dom"/>
</dbReference>
<dbReference type="InterPro" id="IPR006073">
    <property type="entry name" value="GTP-bd"/>
</dbReference>
<dbReference type="InterPro" id="IPR019987">
    <property type="entry name" value="GTP-bd_ribosome_bio_YsxC"/>
</dbReference>
<dbReference type="InterPro" id="IPR027417">
    <property type="entry name" value="P-loop_NTPase"/>
</dbReference>
<dbReference type="InterPro" id="IPR005225">
    <property type="entry name" value="Small_GTP-bd"/>
</dbReference>
<dbReference type="NCBIfam" id="TIGR03598">
    <property type="entry name" value="GTPase_YsxC"/>
    <property type="match status" value="1"/>
</dbReference>
<dbReference type="NCBIfam" id="TIGR00231">
    <property type="entry name" value="small_GTP"/>
    <property type="match status" value="1"/>
</dbReference>
<dbReference type="PANTHER" id="PTHR11649:SF13">
    <property type="entry name" value="ENGB-TYPE G DOMAIN-CONTAINING PROTEIN"/>
    <property type="match status" value="1"/>
</dbReference>
<dbReference type="PANTHER" id="PTHR11649">
    <property type="entry name" value="MSS1/TRME-RELATED GTP-BINDING PROTEIN"/>
    <property type="match status" value="1"/>
</dbReference>
<dbReference type="Pfam" id="PF01926">
    <property type="entry name" value="MMR_HSR1"/>
    <property type="match status" value="1"/>
</dbReference>
<dbReference type="SUPFAM" id="SSF52540">
    <property type="entry name" value="P-loop containing nucleoside triphosphate hydrolases"/>
    <property type="match status" value="1"/>
</dbReference>
<dbReference type="PROSITE" id="PS51706">
    <property type="entry name" value="G_ENGB"/>
    <property type="match status" value="1"/>
</dbReference>
<evidence type="ECO:0000255" key="1">
    <source>
        <dbReference type="HAMAP-Rule" id="MF_00321"/>
    </source>
</evidence>
<reference key="1">
    <citation type="journal article" date="2006" name="Proc. Natl. Acad. Sci. U.S.A.">
        <title>Comparative genomics of the lactic acid bacteria.</title>
        <authorList>
            <person name="Makarova K.S."/>
            <person name="Slesarev A."/>
            <person name="Wolf Y.I."/>
            <person name="Sorokin A."/>
            <person name="Mirkin B."/>
            <person name="Koonin E.V."/>
            <person name="Pavlov A."/>
            <person name="Pavlova N."/>
            <person name="Karamychev V."/>
            <person name="Polouchine N."/>
            <person name="Shakhova V."/>
            <person name="Grigoriev I."/>
            <person name="Lou Y."/>
            <person name="Rohksar D."/>
            <person name="Lucas S."/>
            <person name="Huang K."/>
            <person name="Goodstein D.M."/>
            <person name="Hawkins T."/>
            <person name="Plengvidhya V."/>
            <person name="Welker D."/>
            <person name="Hughes J."/>
            <person name="Goh Y."/>
            <person name="Benson A."/>
            <person name="Baldwin K."/>
            <person name="Lee J.-H."/>
            <person name="Diaz-Muniz I."/>
            <person name="Dosti B."/>
            <person name="Smeianov V."/>
            <person name="Wechter W."/>
            <person name="Barabote R."/>
            <person name="Lorca G."/>
            <person name="Altermann E."/>
            <person name="Barrangou R."/>
            <person name="Ganesan B."/>
            <person name="Xie Y."/>
            <person name="Rawsthorne H."/>
            <person name="Tamir D."/>
            <person name="Parker C."/>
            <person name="Breidt F."/>
            <person name="Broadbent J.R."/>
            <person name="Hutkins R."/>
            <person name="O'Sullivan D."/>
            <person name="Steele J."/>
            <person name="Unlu G."/>
            <person name="Saier M.H. Jr."/>
            <person name="Klaenhammer T."/>
            <person name="Richardson P."/>
            <person name="Kozyavkin S."/>
            <person name="Weimer B.C."/>
            <person name="Mills D.A."/>
        </authorList>
    </citation>
    <scope>NUCLEOTIDE SEQUENCE [LARGE SCALE GENOMIC DNA]</scope>
    <source>
        <strain>ATCC 334 / BCRC 17002 / CCUG 31169 / CIP 107868 / KCTC 3260 / NRRL B-441</strain>
    </source>
</reference>
<comment type="function">
    <text evidence="1">Necessary for normal cell division and for the maintenance of normal septation.</text>
</comment>
<comment type="cofactor">
    <cofactor evidence="1">
        <name>Mg(2+)</name>
        <dbReference type="ChEBI" id="CHEBI:18420"/>
    </cofactor>
</comment>
<comment type="similarity">
    <text evidence="1">Belongs to the TRAFAC class TrmE-Era-EngA-EngB-Septin-like GTPase superfamily. EngB GTPase family.</text>
</comment>